<keyword id="KW-0067">ATP-binding</keyword>
<keyword id="KW-0963">Cytoplasm</keyword>
<keyword id="KW-0206">Cytoskeleton</keyword>
<keyword id="KW-0493">Microtubule</keyword>
<keyword id="KW-0505">Motor protein</keyword>
<keyword id="KW-0547">Nucleotide-binding</keyword>
<keyword id="KW-1185">Reference proteome</keyword>
<name>KI26L_DROPS</name>
<proteinExistence type="inferred from homology"/>
<evidence type="ECO:0000255" key="1">
    <source>
        <dbReference type="PROSITE-ProRule" id="PRU00283"/>
    </source>
</evidence>
<evidence type="ECO:0000256" key="2">
    <source>
        <dbReference type="SAM" id="MobiDB-lite"/>
    </source>
</evidence>
<evidence type="ECO:0000305" key="3"/>
<comment type="subcellular location">
    <subcellularLocation>
        <location evidence="3">Cytoplasm</location>
        <location evidence="3">Cytoskeleton</location>
    </subcellularLocation>
</comment>
<comment type="similarity">
    <text evidence="1">Belongs to the TRAFAC class myosin-kinesin ATPase superfamily. Kinesin family. KIF26 subfamily.</text>
</comment>
<reference key="1">
    <citation type="journal article" date="2005" name="Genome Res.">
        <title>Comparative genome sequencing of Drosophila pseudoobscura: chromosomal, gene, and cis-element evolution.</title>
        <authorList>
            <person name="Richards S."/>
            <person name="Liu Y."/>
            <person name="Bettencourt B.R."/>
            <person name="Hradecky P."/>
            <person name="Letovsky S."/>
            <person name="Nielsen R."/>
            <person name="Thornton K."/>
            <person name="Hubisz M.J."/>
            <person name="Chen R."/>
            <person name="Meisel R.P."/>
            <person name="Couronne O."/>
            <person name="Hua S."/>
            <person name="Smith M.A."/>
            <person name="Zhang P."/>
            <person name="Liu J."/>
            <person name="Bussemaker H.J."/>
            <person name="van Batenburg M.F."/>
            <person name="Howells S.L."/>
            <person name="Scherer S.E."/>
            <person name="Sodergren E."/>
            <person name="Matthews B.B."/>
            <person name="Crosby M.A."/>
            <person name="Schroeder A.J."/>
            <person name="Ortiz-Barrientos D."/>
            <person name="Rives C.M."/>
            <person name="Metzker M.L."/>
            <person name="Muzny D.M."/>
            <person name="Scott G."/>
            <person name="Steffen D."/>
            <person name="Wheeler D.A."/>
            <person name="Worley K.C."/>
            <person name="Havlak P."/>
            <person name="Durbin K.J."/>
            <person name="Egan A."/>
            <person name="Gill R."/>
            <person name="Hume J."/>
            <person name="Morgan M.B."/>
            <person name="Miner G."/>
            <person name="Hamilton C."/>
            <person name="Huang Y."/>
            <person name="Waldron L."/>
            <person name="Verduzco D."/>
            <person name="Clerc-Blankenburg K.P."/>
            <person name="Dubchak I."/>
            <person name="Noor M.A.F."/>
            <person name="Anderson W."/>
            <person name="White K.P."/>
            <person name="Clark A.G."/>
            <person name="Schaeffer S.W."/>
            <person name="Gelbart W.M."/>
            <person name="Weinstock G.M."/>
            <person name="Gibbs R.A."/>
        </authorList>
    </citation>
    <scope>NUCLEOTIDE SEQUENCE [LARGE SCALE GENOMIC DNA]</scope>
    <source>
        <strain>MV2-25 / Tucson 14011-0121.94</strain>
    </source>
</reference>
<accession>Q29MB2</accession>
<organism>
    <name type="scientific">Drosophila pseudoobscura pseudoobscura</name>
    <name type="common">Fruit fly</name>
    <dbReference type="NCBI Taxonomy" id="46245"/>
    <lineage>
        <taxon>Eukaryota</taxon>
        <taxon>Metazoa</taxon>
        <taxon>Ecdysozoa</taxon>
        <taxon>Arthropoda</taxon>
        <taxon>Hexapoda</taxon>
        <taxon>Insecta</taxon>
        <taxon>Pterygota</taxon>
        <taxon>Neoptera</taxon>
        <taxon>Endopterygota</taxon>
        <taxon>Diptera</taxon>
        <taxon>Brachycera</taxon>
        <taxon>Muscomorpha</taxon>
        <taxon>Ephydroidea</taxon>
        <taxon>Drosophilidae</taxon>
        <taxon>Drosophila</taxon>
        <taxon>Sophophora</taxon>
    </lineage>
</organism>
<dbReference type="EMBL" id="CH379060">
    <property type="protein sequence ID" value="EAL33782.2"/>
    <property type="molecule type" value="Genomic_DNA"/>
</dbReference>
<dbReference type="RefSeq" id="XP_001356717.2">
    <property type="nucleotide sequence ID" value="XM_001356681.3"/>
</dbReference>
<dbReference type="SMR" id="Q29MB2"/>
<dbReference type="FunCoup" id="Q29MB2">
    <property type="interactions" value="25"/>
</dbReference>
<dbReference type="STRING" id="46245.Q29MB2"/>
<dbReference type="EnsemblMetazoa" id="FBtr0282172">
    <property type="protein sequence ID" value="FBpp0280610"/>
    <property type="gene ID" value="FBgn0073098"/>
</dbReference>
<dbReference type="KEGG" id="dpo:4817387"/>
<dbReference type="eggNOG" id="KOG4280">
    <property type="taxonomic scope" value="Eukaryota"/>
</dbReference>
<dbReference type="HOGENOM" id="CLU_008498_0_0_1"/>
<dbReference type="InParanoid" id="Q29MB2"/>
<dbReference type="OMA" id="VIYMGPH"/>
<dbReference type="Proteomes" id="UP000001819">
    <property type="component" value="Chromosome 4"/>
</dbReference>
<dbReference type="Bgee" id="FBgn0073098">
    <property type="expression patterns" value="Expressed in insect adult head and 1 other cell type or tissue"/>
</dbReference>
<dbReference type="GO" id="GO:0005737">
    <property type="term" value="C:cytoplasm"/>
    <property type="evidence" value="ECO:0007669"/>
    <property type="project" value="UniProtKB-KW"/>
</dbReference>
<dbReference type="GO" id="GO:0005874">
    <property type="term" value="C:microtubule"/>
    <property type="evidence" value="ECO:0007669"/>
    <property type="project" value="UniProtKB-KW"/>
</dbReference>
<dbReference type="GO" id="GO:0005524">
    <property type="term" value="F:ATP binding"/>
    <property type="evidence" value="ECO:0007669"/>
    <property type="project" value="UniProtKB-KW"/>
</dbReference>
<dbReference type="GO" id="GO:0008017">
    <property type="term" value="F:microtubule binding"/>
    <property type="evidence" value="ECO:0007669"/>
    <property type="project" value="InterPro"/>
</dbReference>
<dbReference type="GO" id="GO:0003777">
    <property type="term" value="F:microtubule motor activity"/>
    <property type="evidence" value="ECO:0007669"/>
    <property type="project" value="InterPro"/>
</dbReference>
<dbReference type="GO" id="GO:0007018">
    <property type="term" value="P:microtubule-based movement"/>
    <property type="evidence" value="ECO:0007669"/>
    <property type="project" value="InterPro"/>
</dbReference>
<dbReference type="FunFam" id="3.40.850.10:FF:000147">
    <property type="entry name" value="kinesin-like protein CG14535"/>
    <property type="match status" value="1"/>
</dbReference>
<dbReference type="Gene3D" id="3.40.850.10">
    <property type="entry name" value="Kinesin motor domain"/>
    <property type="match status" value="1"/>
</dbReference>
<dbReference type="InterPro" id="IPR027640">
    <property type="entry name" value="Kinesin-like_fam"/>
</dbReference>
<dbReference type="InterPro" id="IPR001752">
    <property type="entry name" value="Kinesin_motor_dom"/>
</dbReference>
<dbReference type="InterPro" id="IPR036961">
    <property type="entry name" value="Kinesin_motor_dom_sf"/>
</dbReference>
<dbReference type="InterPro" id="IPR027417">
    <property type="entry name" value="P-loop_NTPase"/>
</dbReference>
<dbReference type="PANTHER" id="PTHR21608">
    <property type="entry name" value="KINESIN-LIKE PROTEIN CG14535"/>
    <property type="match status" value="1"/>
</dbReference>
<dbReference type="PANTHER" id="PTHR21608:SF7">
    <property type="entry name" value="KINESIN-LIKE PROTEIN CG14535"/>
    <property type="match status" value="1"/>
</dbReference>
<dbReference type="Pfam" id="PF00225">
    <property type="entry name" value="Kinesin"/>
    <property type="match status" value="1"/>
</dbReference>
<dbReference type="SMART" id="SM00129">
    <property type="entry name" value="KISc"/>
    <property type="match status" value="1"/>
</dbReference>
<dbReference type="SUPFAM" id="SSF52540">
    <property type="entry name" value="P-loop containing nucleoside triphosphate hydrolases"/>
    <property type="match status" value="1"/>
</dbReference>
<dbReference type="PROSITE" id="PS50067">
    <property type="entry name" value="KINESIN_MOTOR_2"/>
    <property type="match status" value="1"/>
</dbReference>
<gene>
    <name type="ORF">GA13060</name>
</gene>
<feature type="chain" id="PRO_0000307304" description="Kinesin-like protein GA13060">
    <location>
        <begin position="1"/>
        <end position="1171"/>
    </location>
</feature>
<feature type="domain" description="Kinesin motor" evidence="1">
    <location>
        <begin position="40"/>
        <end position="400"/>
    </location>
</feature>
<feature type="region of interest" description="Disordered" evidence="2">
    <location>
        <begin position="1"/>
        <end position="24"/>
    </location>
</feature>
<feature type="region of interest" description="Disordered" evidence="2">
    <location>
        <begin position="737"/>
        <end position="774"/>
    </location>
</feature>
<feature type="region of interest" description="Disordered" evidence="2">
    <location>
        <begin position="798"/>
        <end position="820"/>
    </location>
</feature>
<feature type="region of interest" description="Disordered" evidence="2">
    <location>
        <begin position="932"/>
        <end position="955"/>
    </location>
</feature>
<feature type="region of interest" description="Disordered" evidence="2">
    <location>
        <begin position="1043"/>
        <end position="1099"/>
    </location>
</feature>
<feature type="region of interest" description="Disordered" evidence="2">
    <location>
        <begin position="1124"/>
        <end position="1143"/>
    </location>
</feature>
<feature type="compositionally biased region" description="Basic residues" evidence="2">
    <location>
        <begin position="805"/>
        <end position="816"/>
    </location>
</feature>
<feature type="compositionally biased region" description="Polar residues" evidence="2">
    <location>
        <begin position="1043"/>
        <end position="1059"/>
    </location>
</feature>
<feature type="compositionally biased region" description="Basic residues" evidence="2">
    <location>
        <begin position="1124"/>
        <end position="1139"/>
    </location>
</feature>
<sequence length="1171" mass="124349">MASSISRNGGFCGALQRAPPPMPPGLARRLSSRECYGVGKVKVMLRVSDRAPDKDSPLDPEFMALDKKKRQVTLTDPRNVCPPPQAAQERGPMVAAPKMFAFDNLFTAEDKQSDVCASALSEVIPAVLEGSDGCLLAMGYPSTGQPHTVLGGDVATGAGAGAATGTGTGTGSVAACSLGAAPCAIAWLYKGIQERRQKSGARFSVRVSAVGVSATKPDALSTDLLISHAAESDDSPGIYLRDDFLGGPTELRAPTAERAALFLDSALAGRLKSSGSTSTPAGGGPAPLESALIFTLHVYQYSLSRKGGVAGGRSRLHIIDLGGCANRSGGLPLSGIGNILLAILSGQRHPPHKDHPLTPLLKDCLAPITCHVAIVAHVLHEQSYQDALSTIQIASRIHRLRRRKHRVPMPLAVGLAQGLSGGGGSSAGSGADPSSSEISADTVIYMGPNDDATDGEHPPVYLPSLSAGDNRAIMSKALKGSGLEKPPTQMKAGLSSPMMMKKAMAAAGEKVKKLPGNSPMGSLKRQAAAGACSSPLVPHEQQQQQQQIAHGSPIPIPRHMVSKGSNVPSPKGSPLRRAHAGAHPGAALEQLEAGMRKITEEQWIDGPRVSRAKVAEARHLMREVNHVKQCETWVDGPKSLSCRSLTAGNLPAAGAQTQGYGFMDSHKKTMIRQWVETQTSQVFQSPATVSASNSPTALHWKLSQLKQKSLDLPERPAFPPEQQSMDLPQQCFESQPLLGQDMSLPPDGDEDQDSGPSEVPPALPLFDDPLGSRDISHDSLHRMLSRHVSREQLHEADLVASRASSSHHQHQHHRPSSQRSIDCGLQVTEEEIARTMAREQEHSMHPLSALSHCDNLSFVSSFNMACESFSECGERARHQFDQLARLHEIFTSQLAMAEVTPSAALFRTDVSSVFSEPVFRFNVGQSSVCSEPAYRLTPSPPKQPSHSPSQGSLPSLNGIMEIAGMDDYALLRQPDGASDPSLPKSEKRFAPQHDDICELDEKAMAAAVGKRNSLEDAQHKLNEITNILPLAAQSRLPLLPLNTSSEAYDSGHDSNSTPRTSKHSGISRRAESGYHSVATVRDSDESSFASGMSKGQRHRITISGGGGGGCGAGGGGSATGNYQRHSHGVGGHKKHRHRHEGNGGGNKGLCNWLLTPFSCTYPETEGEISDF</sequence>
<protein>
    <recommendedName>
        <fullName>Kinesin-like protein GA13060</fullName>
    </recommendedName>
</protein>